<reference key="1">
    <citation type="journal article" date="2004" name="Fungal Genet. Biol.">
        <title>Insight into the genome of Aspergillus fumigatus: analysis of a 922 kb region encompassing the nitrate assimilation gene cluster.</title>
        <authorList>
            <person name="Pain A."/>
            <person name="Woodward J.R."/>
            <person name="Quail M.A."/>
            <person name="Anderson M.J."/>
            <person name="Clark R."/>
            <person name="Collins M."/>
            <person name="Fosker N."/>
            <person name="Fraser A."/>
            <person name="Harris D.E."/>
            <person name="Larke N."/>
            <person name="Murphy L.D."/>
            <person name="Humphray S."/>
            <person name="O'Neil S."/>
            <person name="Pertea M."/>
            <person name="Price C."/>
            <person name="Rabbinowitsch E."/>
            <person name="Rajandream M.A."/>
            <person name="Salzberg S.L."/>
            <person name="Saunders D."/>
            <person name="Seeger K."/>
            <person name="Sharp S."/>
            <person name="Warren T."/>
            <person name="Denning D.W."/>
            <person name="Barrell B.G."/>
            <person name="Hall N."/>
        </authorList>
    </citation>
    <scope>NUCLEOTIDE SEQUENCE [LARGE SCALE GENOMIC DNA]</scope>
    <source>
        <strain>ATCC MYA-4609 / CBS 101355 / FGSC A1100 / Af293</strain>
    </source>
</reference>
<reference key="2">
    <citation type="journal article" date="2005" name="Nature">
        <title>Genomic sequence of the pathogenic and allergenic filamentous fungus Aspergillus fumigatus.</title>
        <authorList>
            <person name="Nierman W.C."/>
            <person name="Pain A."/>
            <person name="Anderson M.J."/>
            <person name="Wortman J.R."/>
            <person name="Kim H.S."/>
            <person name="Arroyo J."/>
            <person name="Berriman M."/>
            <person name="Abe K."/>
            <person name="Archer D.B."/>
            <person name="Bermejo C."/>
            <person name="Bennett J.W."/>
            <person name="Bowyer P."/>
            <person name="Chen D."/>
            <person name="Collins M."/>
            <person name="Coulsen R."/>
            <person name="Davies R."/>
            <person name="Dyer P.S."/>
            <person name="Farman M.L."/>
            <person name="Fedorova N."/>
            <person name="Fedorova N.D."/>
            <person name="Feldblyum T.V."/>
            <person name="Fischer R."/>
            <person name="Fosker N."/>
            <person name="Fraser A."/>
            <person name="Garcia J.L."/>
            <person name="Garcia M.J."/>
            <person name="Goble A."/>
            <person name="Goldman G.H."/>
            <person name="Gomi K."/>
            <person name="Griffith-Jones S."/>
            <person name="Gwilliam R."/>
            <person name="Haas B.J."/>
            <person name="Haas H."/>
            <person name="Harris D.E."/>
            <person name="Horiuchi H."/>
            <person name="Huang J."/>
            <person name="Humphray S."/>
            <person name="Jimenez J."/>
            <person name="Keller N."/>
            <person name="Khouri H."/>
            <person name="Kitamoto K."/>
            <person name="Kobayashi T."/>
            <person name="Konzack S."/>
            <person name="Kulkarni R."/>
            <person name="Kumagai T."/>
            <person name="Lafton A."/>
            <person name="Latge J.-P."/>
            <person name="Li W."/>
            <person name="Lord A."/>
            <person name="Lu C."/>
            <person name="Majoros W.H."/>
            <person name="May G.S."/>
            <person name="Miller B.L."/>
            <person name="Mohamoud Y."/>
            <person name="Molina M."/>
            <person name="Monod M."/>
            <person name="Mouyna I."/>
            <person name="Mulligan S."/>
            <person name="Murphy L.D."/>
            <person name="O'Neil S."/>
            <person name="Paulsen I."/>
            <person name="Penalva M.A."/>
            <person name="Pertea M."/>
            <person name="Price C."/>
            <person name="Pritchard B.L."/>
            <person name="Quail M.A."/>
            <person name="Rabbinowitsch E."/>
            <person name="Rawlins N."/>
            <person name="Rajandream M.A."/>
            <person name="Reichard U."/>
            <person name="Renauld H."/>
            <person name="Robson G.D."/>
            <person name="Rodriguez de Cordoba S."/>
            <person name="Rodriguez-Pena J.M."/>
            <person name="Ronning C.M."/>
            <person name="Rutter S."/>
            <person name="Salzberg S.L."/>
            <person name="Sanchez M."/>
            <person name="Sanchez-Ferrero J.C."/>
            <person name="Saunders D."/>
            <person name="Seeger K."/>
            <person name="Squares R."/>
            <person name="Squares S."/>
            <person name="Takeuchi M."/>
            <person name="Tekaia F."/>
            <person name="Turner G."/>
            <person name="Vazquez de Aldana C.R."/>
            <person name="Weidman J."/>
            <person name="White O."/>
            <person name="Woodward J.R."/>
            <person name="Yu J.-H."/>
            <person name="Fraser C.M."/>
            <person name="Galagan J.E."/>
            <person name="Asai K."/>
            <person name="Machida M."/>
            <person name="Hall N."/>
            <person name="Barrell B.G."/>
            <person name="Denning D.W."/>
        </authorList>
    </citation>
    <scope>NUCLEOTIDE SEQUENCE [LARGE SCALE GENOMIC DNA]</scope>
    <source>
        <strain>ATCC MYA-4609 / CBS 101355 / FGSC A1100 / Af293</strain>
    </source>
</reference>
<gene>
    <name type="primary">stu1</name>
    <name type="ORF">AfA8D5.001c</name>
    <name type="ORF">AFUA_1G12700</name>
</gene>
<organism>
    <name type="scientific">Aspergillus fumigatus (strain ATCC MYA-4609 / CBS 101355 / FGSC A1100 / Af293)</name>
    <name type="common">Neosartorya fumigata</name>
    <dbReference type="NCBI Taxonomy" id="330879"/>
    <lineage>
        <taxon>Eukaryota</taxon>
        <taxon>Fungi</taxon>
        <taxon>Dikarya</taxon>
        <taxon>Ascomycota</taxon>
        <taxon>Pezizomycotina</taxon>
        <taxon>Eurotiomycetes</taxon>
        <taxon>Eurotiomycetidae</taxon>
        <taxon>Eurotiales</taxon>
        <taxon>Aspergillaceae</taxon>
        <taxon>Aspergillus</taxon>
        <taxon>Aspergillus subgen. Fumigati</taxon>
    </lineage>
</organism>
<name>STU1_ASPFU</name>
<comment type="function">
    <text evidence="1">Microtubule binding protein that promotes the stabilization of dynamic microtubules. Required for mitotic spindle formation (By similarity).</text>
</comment>
<comment type="subunit">
    <text evidence="1">Interacts with microtubules.</text>
</comment>
<comment type="subcellular location">
    <subcellularLocation>
        <location evidence="1">Cytoplasm</location>
        <location evidence="1">Cytoskeleton</location>
    </subcellularLocation>
    <subcellularLocation>
        <location evidence="1">Nucleus</location>
    </subcellularLocation>
    <subcellularLocation>
        <location evidence="1">Cytoplasm</location>
        <location evidence="1">Cytoskeleton</location>
        <location evidence="1">Spindle</location>
    </subcellularLocation>
</comment>
<comment type="similarity">
    <text evidence="3">Belongs to the CLASP family.</text>
</comment>
<comment type="sequence caution" evidence="3">
    <conflict type="erroneous gene model prediction">
        <sequence resource="EMBL-CDS" id="CAF31989"/>
    </conflict>
</comment>
<comment type="sequence caution" evidence="3">
    <conflict type="erroneous initiation">
        <sequence resource="EMBL-CDS" id="EAL90602"/>
    </conflict>
</comment>
<accession>Q4WSI0</accession>
<accession>Q6MYL4</accession>
<dbReference type="EMBL" id="BX649606">
    <property type="protein sequence ID" value="CAF31989.1"/>
    <property type="status" value="ALT_SEQ"/>
    <property type="molecule type" value="Genomic_DNA"/>
</dbReference>
<dbReference type="EMBL" id="AAHF01000004">
    <property type="protein sequence ID" value="EAL90602.1"/>
    <property type="status" value="ALT_INIT"/>
    <property type="molecule type" value="Genomic_DNA"/>
</dbReference>
<dbReference type="RefSeq" id="XP_752640.1">
    <property type="nucleotide sequence ID" value="XM_747547.1"/>
</dbReference>
<dbReference type="STRING" id="330879.Q4WSI0"/>
<dbReference type="GeneID" id="3510390"/>
<dbReference type="KEGG" id="afm:AFUA_1G12700"/>
<dbReference type="eggNOG" id="ENOG502QT5T">
    <property type="taxonomic scope" value="Eukaryota"/>
</dbReference>
<dbReference type="HOGENOM" id="CLU_004060_0_0_1"/>
<dbReference type="InParanoid" id="Q4WSI0"/>
<dbReference type="OrthoDB" id="46159at2759"/>
<dbReference type="Proteomes" id="UP000002530">
    <property type="component" value="Chromosome 1"/>
</dbReference>
<dbReference type="GO" id="GO:0005881">
    <property type="term" value="C:cytoplasmic microtubule"/>
    <property type="evidence" value="ECO:0000318"/>
    <property type="project" value="GO_Central"/>
</dbReference>
<dbReference type="GO" id="GO:0005815">
    <property type="term" value="C:microtubule organizing center"/>
    <property type="evidence" value="ECO:0000318"/>
    <property type="project" value="GO_Central"/>
</dbReference>
<dbReference type="GO" id="GO:0072686">
    <property type="term" value="C:mitotic spindle"/>
    <property type="evidence" value="ECO:0000318"/>
    <property type="project" value="GO_Central"/>
</dbReference>
<dbReference type="GO" id="GO:1990023">
    <property type="term" value="C:mitotic spindle midzone"/>
    <property type="evidence" value="ECO:0000318"/>
    <property type="project" value="GO_Central"/>
</dbReference>
<dbReference type="GO" id="GO:0005634">
    <property type="term" value="C:nucleus"/>
    <property type="evidence" value="ECO:0007669"/>
    <property type="project" value="UniProtKB-SubCell"/>
</dbReference>
<dbReference type="GO" id="GO:0005876">
    <property type="term" value="C:spindle microtubule"/>
    <property type="evidence" value="ECO:0000318"/>
    <property type="project" value="GO_Central"/>
</dbReference>
<dbReference type="GO" id="GO:0008017">
    <property type="term" value="F:microtubule binding"/>
    <property type="evidence" value="ECO:0000318"/>
    <property type="project" value="GO_Central"/>
</dbReference>
<dbReference type="GO" id="GO:0060172">
    <property type="term" value="P:astral microtubule depolymerization"/>
    <property type="evidence" value="ECO:0000318"/>
    <property type="project" value="GO_Central"/>
</dbReference>
<dbReference type="GO" id="GO:0051301">
    <property type="term" value="P:cell division"/>
    <property type="evidence" value="ECO:0007669"/>
    <property type="project" value="UniProtKB-KW"/>
</dbReference>
<dbReference type="GO" id="GO:0090307">
    <property type="term" value="P:mitotic spindle assembly"/>
    <property type="evidence" value="ECO:0000318"/>
    <property type="project" value="GO_Central"/>
</dbReference>
<dbReference type="Gene3D" id="1.25.10.10">
    <property type="entry name" value="Leucine-rich Repeat Variant"/>
    <property type="match status" value="3"/>
</dbReference>
<dbReference type="InterPro" id="IPR011989">
    <property type="entry name" value="ARM-like"/>
</dbReference>
<dbReference type="InterPro" id="IPR016024">
    <property type="entry name" value="ARM-type_fold"/>
</dbReference>
<dbReference type="InterPro" id="IPR024395">
    <property type="entry name" value="CLASP_N_dom"/>
</dbReference>
<dbReference type="InterPro" id="IPR034085">
    <property type="entry name" value="TOG"/>
</dbReference>
<dbReference type="PANTHER" id="PTHR21567">
    <property type="entry name" value="CLASP"/>
    <property type="match status" value="1"/>
</dbReference>
<dbReference type="PANTHER" id="PTHR21567:SF9">
    <property type="entry name" value="CLIP-ASSOCIATING PROTEIN"/>
    <property type="match status" value="1"/>
</dbReference>
<dbReference type="Pfam" id="PF12348">
    <property type="entry name" value="CLASP_N"/>
    <property type="match status" value="2"/>
</dbReference>
<dbReference type="SMART" id="SM01349">
    <property type="entry name" value="TOG"/>
    <property type="match status" value="2"/>
</dbReference>
<dbReference type="SUPFAM" id="SSF48371">
    <property type="entry name" value="ARM repeat"/>
    <property type="match status" value="1"/>
</dbReference>
<proteinExistence type="inferred from homology"/>
<protein>
    <recommendedName>
        <fullName>Protein stu1</fullName>
    </recommendedName>
</protein>
<evidence type="ECO:0000250" key="1"/>
<evidence type="ECO:0000256" key="2">
    <source>
        <dbReference type="SAM" id="MobiDB-lite"/>
    </source>
</evidence>
<evidence type="ECO:0000305" key="3"/>
<keyword id="KW-0131">Cell cycle</keyword>
<keyword id="KW-0132">Cell division</keyword>
<keyword id="KW-0963">Cytoplasm</keyword>
<keyword id="KW-0206">Cytoskeleton</keyword>
<keyword id="KW-0493">Microtubule</keyword>
<keyword id="KW-0498">Mitosis</keyword>
<keyword id="KW-0539">Nucleus</keyword>
<keyword id="KW-1185">Reference proteome</keyword>
<keyword id="KW-0677">Repeat</keyword>
<sequence>MMEVKAAELVAALKNSNMSVDTKVAHLQCVKSDIKQKNVPEGAVPSIFESIRLAIASQHSSLSGAGFSTLGHFLKRLLIQELHHLVALQCRALYPLLVERLGDHKERIRAQAAQSFTDMWLAAPEEVEQCVLGQALVGKNPRAKEMSMIWLSNVSSSFNIGGFSSFLTIALQMTKNYGLLFRSYVSSLVACLEDADSNVRNTAKNTVIELFENASERAKSDLKRQMATHNVRKSFVNAILASIDHGTSDMDAASRPISRAEALVHRPVSRAETQASRSVSRLDTHQRPASRMELAQSSVLHTEALPPRPVSVLSSRSETHKEVTKEVIGVERPKSRLTTAKSEPNWAVVSHTGPAEELPLPSSRPASQEGEKIDALYVSSSRQVDELFRDMMPHFEGRESEDNWIRREKDVLTLRRLTHGNAPDDYSPAYLAGLKTLLDGIFKVVNSLRTTLSTIGCLLIQDIAKRCGPRIDSMVEIMMQNLIKLCSGMKKISAQNGNATVDALIENVTFTTRILQHVSGACQDKNVQLRLFAAGWLKTLIQKQSHHKSSIEHGGGLDMMEKSVKKCLADANPGVREAMRSTFWTYYRVWPNRANEILSNLDPKSRSLLEKDPANPNAHQSAPKDSGPSRKGLANGTSSLAGRSALKEAIAAQKKARLAPAKAVPPPRPESAQSALSDKHSSAPSSSKSSVRTVPTGTSLSSLSSAPVRPAAKPRRPELNRPATADPYAARRSVATDSSTRHGNQIDGSPSAAKSKSSTPSLKSVSSTGSRDRADPVGTTRDRPKRLVISKTRSHDTHTRQHSKPIPTHSRKNSNESIPRHSPLRSEFSVTPISPNSVSLETPSTPRSHLVQDHGNLIAIASPPTHIQRTPIEPDASAEDPREHAAKATPVAIFEDTTPARSDHDDIQDAAMTLTENQTPQPSKVHSDSPIVSNKRVSNQDESVPHLTTGLGFLTGVGSVVEASELPNSDAQTDQSLFADHSLPVTHQPDSVTDSSKPSGLSSSLMVAGSPIRVANNENEIVIDSKTTHVSLPHRSSPKHNVLGELTSNEPSQRANKQIRHAANKLEDEVTTPIDDHSRHRWKKVEIADRRTSISPRSKDPTKAQQMLDKGIQRIRTKTMDILGYRKLQGIIKYHDSIFTNEEKYDEMLLALLDELESSPDDKRQPLGRPLDLKTQVLLTIRLMLIHNKIYFSAYCSRALGALVLARKYYDANCHIVSGLEETADDIIALCEPAAVIDSVLDVIITEEKDDREYRSILMGVSVLTRILSRLNADKCRVPELPLDRLGQFAASKLADRQPDVRRLAVQLCVQLHGMVANEEEYWRVLGHPRENSRNLLTYYILKK</sequence>
<feature type="chain" id="PRO_0000272282" description="Protein stu1">
    <location>
        <begin position="1"/>
        <end position="1344"/>
    </location>
</feature>
<feature type="repeat" description="HEAT 1">
    <location>
        <begin position="93"/>
        <end position="131"/>
    </location>
</feature>
<feature type="repeat" description="HEAT 2">
    <location>
        <begin position="508"/>
        <end position="544"/>
    </location>
</feature>
<feature type="region of interest" description="Disordered" evidence="2">
    <location>
        <begin position="265"/>
        <end position="292"/>
    </location>
</feature>
<feature type="region of interest" description="Disordered" evidence="2">
    <location>
        <begin position="606"/>
        <end position="637"/>
    </location>
</feature>
<feature type="region of interest" description="Disordered" evidence="2">
    <location>
        <begin position="651"/>
        <end position="847"/>
    </location>
</feature>
<feature type="region of interest" description="Disordered" evidence="2">
    <location>
        <begin position="914"/>
        <end position="945"/>
    </location>
</feature>
<feature type="region of interest" description="Disordered" evidence="2">
    <location>
        <begin position="984"/>
        <end position="1004"/>
    </location>
</feature>
<feature type="region of interest" description="Disordered" evidence="2">
    <location>
        <begin position="1031"/>
        <end position="1054"/>
    </location>
</feature>
<feature type="compositionally biased region" description="Polar residues" evidence="2">
    <location>
        <begin position="691"/>
        <end position="705"/>
    </location>
</feature>
<feature type="compositionally biased region" description="Polar residues" evidence="2">
    <location>
        <begin position="735"/>
        <end position="747"/>
    </location>
</feature>
<feature type="compositionally biased region" description="Low complexity" evidence="2">
    <location>
        <begin position="748"/>
        <end position="769"/>
    </location>
</feature>
<feature type="compositionally biased region" description="Polar residues" evidence="2">
    <location>
        <begin position="828"/>
        <end position="847"/>
    </location>
</feature>
<feature type="compositionally biased region" description="Polar residues" evidence="2">
    <location>
        <begin position="914"/>
        <end position="942"/>
    </location>
</feature>
<feature type="compositionally biased region" description="Low complexity" evidence="2">
    <location>
        <begin position="995"/>
        <end position="1004"/>
    </location>
</feature>